<feature type="chain" id="PRO_1000129609" description="Glutamate--cysteine ligase">
    <location>
        <begin position="1"/>
        <end position="518"/>
    </location>
</feature>
<keyword id="KW-0067">ATP-binding</keyword>
<keyword id="KW-0317">Glutathione biosynthesis</keyword>
<keyword id="KW-0436">Ligase</keyword>
<keyword id="KW-0547">Nucleotide-binding</keyword>
<keyword id="KW-1185">Reference proteome</keyword>
<proteinExistence type="inferred from homology"/>
<protein>
    <recommendedName>
        <fullName evidence="1">Glutamate--cysteine ligase</fullName>
        <ecNumber evidence="1">6.3.2.2</ecNumber>
    </recommendedName>
    <alternativeName>
        <fullName evidence="1">Gamma-ECS</fullName>
        <shortName evidence="1">GCS</shortName>
    </alternativeName>
    <alternativeName>
        <fullName evidence="1">Gamma-glutamylcysteine synthetase</fullName>
    </alternativeName>
</protein>
<organism>
    <name type="scientific">Shigella boydii serotype 18 (strain CDC 3083-94 / BS512)</name>
    <dbReference type="NCBI Taxonomy" id="344609"/>
    <lineage>
        <taxon>Bacteria</taxon>
        <taxon>Pseudomonadati</taxon>
        <taxon>Pseudomonadota</taxon>
        <taxon>Gammaproteobacteria</taxon>
        <taxon>Enterobacterales</taxon>
        <taxon>Enterobacteriaceae</taxon>
        <taxon>Shigella</taxon>
    </lineage>
</organism>
<sequence length="518" mass="58373">MIPDVSQALAWLEKHPQALKGIQRGLERETLRVNADGTLATTGHPEALGSALTHKWITTDFAEALLEFITPVDGDIEHMLTFMRDLHRYTARNMGDERMWPLSMPCYIAEGQDIELAQYGTSNTGRFKTLYREGLKNRYGALMQTISGVHYNFSLPMAFWQAKCGDISGTDAKEKISAGYFRVIRNYYRFGWVIPYLFGASPAIFSSFLQGKPTSLPFEKTECGMYYLPYATSLRLSDLGYTNKSQSNLGITFNDLYEYVAGLKQAIKTPSEEYAKIGIEKDGKRLQINSNVLQIENELYAPIRPKRVTRSGESPSDALLRGGIEYIEVRSLDINPFSPIGVDEQQVRFLDLFMVWCALADAPEMSSSELACTRVNWNRVILEGRKPGLTLGIGCETAQFPLPQVGKDLFRDLKRVAQTLDSINGGEAYQKVCDELVACFDNPDLTFSARILRSMIDTGIGGTGKAFAEAYRNLLREEPLEILREEDFVAEREASERRQQEMETADTEPFAVWLEKHA</sequence>
<gene>
    <name evidence="1" type="primary">gshA</name>
    <name type="ordered locus">SbBS512_E3188</name>
</gene>
<accession>B2U053</accession>
<evidence type="ECO:0000255" key="1">
    <source>
        <dbReference type="HAMAP-Rule" id="MF_00578"/>
    </source>
</evidence>
<name>GSH1_SHIB3</name>
<reference key="1">
    <citation type="submission" date="2008-05" db="EMBL/GenBank/DDBJ databases">
        <title>Complete sequence of Shigella boydii serotype 18 strain BS512.</title>
        <authorList>
            <person name="Rasko D.A."/>
            <person name="Rosovitz M."/>
            <person name="Maurelli A.T."/>
            <person name="Myers G."/>
            <person name="Seshadri R."/>
            <person name="Cer R."/>
            <person name="Jiang L."/>
            <person name="Ravel J."/>
            <person name="Sebastian Y."/>
        </authorList>
    </citation>
    <scope>NUCLEOTIDE SEQUENCE [LARGE SCALE GENOMIC DNA]</scope>
    <source>
        <strain>CDC 3083-94 / BS512</strain>
    </source>
</reference>
<dbReference type="EC" id="6.3.2.2" evidence="1"/>
<dbReference type="EMBL" id="CP001063">
    <property type="protein sequence ID" value="ACD08804.1"/>
    <property type="molecule type" value="Genomic_DNA"/>
</dbReference>
<dbReference type="RefSeq" id="WP_000611811.1">
    <property type="nucleotide sequence ID" value="NC_010658.1"/>
</dbReference>
<dbReference type="SMR" id="B2U053"/>
<dbReference type="STRING" id="344609.SbBS512_E3188"/>
<dbReference type="KEGG" id="sbc:SbBS512_E3188"/>
<dbReference type="HOGENOM" id="CLU_020728_3_0_6"/>
<dbReference type="UniPathway" id="UPA00142">
    <property type="reaction ID" value="UER00209"/>
</dbReference>
<dbReference type="Proteomes" id="UP000001030">
    <property type="component" value="Chromosome"/>
</dbReference>
<dbReference type="GO" id="GO:0005829">
    <property type="term" value="C:cytosol"/>
    <property type="evidence" value="ECO:0007669"/>
    <property type="project" value="TreeGrafter"/>
</dbReference>
<dbReference type="GO" id="GO:0005524">
    <property type="term" value="F:ATP binding"/>
    <property type="evidence" value="ECO:0007669"/>
    <property type="project" value="UniProtKB-KW"/>
</dbReference>
<dbReference type="GO" id="GO:0004357">
    <property type="term" value="F:glutamate-cysteine ligase activity"/>
    <property type="evidence" value="ECO:0007669"/>
    <property type="project" value="UniProtKB-UniRule"/>
</dbReference>
<dbReference type="GO" id="GO:0046872">
    <property type="term" value="F:metal ion binding"/>
    <property type="evidence" value="ECO:0007669"/>
    <property type="project" value="TreeGrafter"/>
</dbReference>
<dbReference type="GO" id="GO:0006750">
    <property type="term" value="P:glutathione biosynthetic process"/>
    <property type="evidence" value="ECO:0007669"/>
    <property type="project" value="UniProtKB-UniRule"/>
</dbReference>
<dbReference type="FunFam" id="3.30.590.20:FF:000001">
    <property type="entry name" value="Glutamate--cysteine ligase"/>
    <property type="match status" value="1"/>
</dbReference>
<dbReference type="Gene3D" id="3.30.590.20">
    <property type="match status" value="1"/>
</dbReference>
<dbReference type="HAMAP" id="MF_00578">
    <property type="entry name" value="Glu_cys_ligase"/>
    <property type="match status" value="1"/>
</dbReference>
<dbReference type="InterPro" id="IPR014746">
    <property type="entry name" value="Gln_synth/guanido_kin_cat_dom"/>
</dbReference>
<dbReference type="InterPro" id="IPR007370">
    <property type="entry name" value="Glu_cys_ligase"/>
</dbReference>
<dbReference type="InterPro" id="IPR006334">
    <property type="entry name" value="Glut_cys_ligase"/>
</dbReference>
<dbReference type="NCBIfam" id="TIGR01434">
    <property type="entry name" value="glu_cys_ligase"/>
    <property type="match status" value="1"/>
</dbReference>
<dbReference type="PANTHER" id="PTHR38761">
    <property type="entry name" value="GLUTAMATE--CYSTEINE LIGASE"/>
    <property type="match status" value="1"/>
</dbReference>
<dbReference type="PANTHER" id="PTHR38761:SF1">
    <property type="entry name" value="GLUTAMATE--CYSTEINE LIGASE"/>
    <property type="match status" value="1"/>
</dbReference>
<dbReference type="Pfam" id="PF04262">
    <property type="entry name" value="Glu_cys_ligase"/>
    <property type="match status" value="1"/>
</dbReference>
<dbReference type="SUPFAM" id="SSF55931">
    <property type="entry name" value="Glutamine synthetase/guanido kinase"/>
    <property type="match status" value="1"/>
</dbReference>
<comment type="catalytic activity">
    <reaction evidence="1">
        <text>L-cysteine + L-glutamate + ATP = gamma-L-glutamyl-L-cysteine + ADP + phosphate + H(+)</text>
        <dbReference type="Rhea" id="RHEA:13285"/>
        <dbReference type="ChEBI" id="CHEBI:15378"/>
        <dbReference type="ChEBI" id="CHEBI:29985"/>
        <dbReference type="ChEBI" id="CHEBI:30616"/>
        <dbReference type="ChEBI" id="CHEBI:35235"/>
        <dbReference type="ChEBI" id="CHEBI:43474"/>
        <dbReference type="ChEBI" id="CHEBI:58173"/>
        <dbReference type="ChEBI" id="CHEBI:456216"/>
        <dbReference type="EC" id="6.3.2.2"/>
    </reaction>
</comment>
<comment type="pathway">
    <text evidence="1">Sulfur metabolism; glutathione biosynthesis; glutathione from L-cysteine and L-glutamate: step 1/2.</text>
</comment>
<comment type="similarity">
    <text evidence="1">Belongs to the glutamate--cysteine ligase type 1 family. Type 1 subfamily.</text>
</comment>